<gene>
    <name evidence="2" type="primary">lysA</name>
    <name type="ordered locus">MTH_1335</name>
</gene>
<proteinExistence type="inferred from homology"/>
<dbReference type="EC" id="4.1.1.20" evidence="2"/>
<dbReference type="EMBL" id="AE000666">
    <property type="protein sequence ID" value="AAB85813.1"/>
    <property type="molecule type" value="Genomic_DNA"/>
</dbReference>
<dbReference type="PIR" id="E69044">
    <property type="entry name" value="E69044"/>
</dbReference>
<dbReference type="RefSeq" id="WP_010876948.1">
    <property type="nucleotide sequence ID" value="NC_000916.1"/>
</dbReference>
<dbReference type="SMR" id="O27390"/>
<dbReference type="FunCoup" id="O27390">
    <property type="interactions" value="120"/>
</dbReference>
<dbReference type="STRING" id="187420.MTH_1335"/>
<dbReference type="PaxDb" id="187420-MTH_1335"/>
<dbReference type="EnsemblBacteria" id="AAB85813">
    <property type="protein sequence ID" value="AAB85813"/>
    <property type="gene ID" value="MTH_1335"/>
</dbReference>
<dbReference type="GeneID" id="1471052"/>
<dbReference type="GeneID" id="77401859"/>
<dbReference type="KEGG" id="mth:MTH_1335"/>
<dbReference type="PATRIC" id="fig|187420.15.peg.1301"/>
<dbReference type="HOGENOM" id="CLU_026444_0_2_2"/>
<dbReference type="InParanoid" id="O27390"/>
<dbReference type="UniPathway" id="UPA00034">
    <property type="reaction ID" value="UER00027"/>
</dbReference>
<dbReference type="Proteomes" id="UP000005223">
    <property type="component" value="Chromosome"/>
</dbReference>
<dbReference type="GO" id="GO:0008836">
    <property type="term" value="F:diaminopimelate decarboxylase activity"/>
    <property type="evidence" value="ECO:0007669"/>
    <property type="project" value="UniProtKB-UniRule"/>
</dbReference>
<dbReference type="GO" id="GO:0030170">
    <property type="term" value="F:pyridoxal phosphate binding"/>
    <property type="evidence" value="ECO:0007669"/>
    <property type="project" value="UniProtKB-UniRule"/>
</dbReference>
<dbReference type="GO" id="GO:0009089">
    <property type="term" value="P:lysine biosynthetic process via diaminopimelate"/>
    <property type="evidence" value="ECO:0007669"/>
    <property type="project" value="UniProtKB-UniRule"/>
</dbReference>
<dbReference type="CDD" id="cd06828">
    <property type="entry name" value="PLPDE_III_DapDC"/>
    <property type="match status" value="1"/>
</dbReference>
<dbReference type="FunFam" id="2.40.37.10:FF:000003">
    <property type="entry name" value="Diaminopimelate decarboxylase"/>
    <property type="match status" value="1"/>
</dbReference>
<dbReference type="FunFam" id="3.20.20.10:FF:000003">
    <property type="entry name" value="Diaminopimelate decarboxylase"/>
    <property type="match status" value="1"/>
</dbReference>
<dbReference type="Gene3D" id="3.20.20.10">
    <property type="entry name" value="Alanine racemase"/>
    <property type="match status" value="1"/>
</dbReference>
<dbReference type="Gene3D" id="2.40.37.10">
    <property type="entry name" value="Lyase, Ornithine Decarboxylase, Chain A, domain 1"/>
    <property type="match status" value="1"/>
</dbReference>
<dbReference type="HAMAP" id="MF_02120">
    <property type="entry name" value="LysA"/>
    <property type="match status" value="1"/>
</dbReference>
<dbReference type="InterPro" id="IPR009006">
    <property type="entry name" value="Ala_racemase/Decarboxylase_C"/>
</dbReference>
<dbReference type="InterPro" id="IPR002986">
    <property type="entry name" value="DAP_deCOOHase_LysA"/>
</dbReference>
<dbReference type="InterPro" id="IPR022643">
    <property type="entry name" value="De-COase2_C"/>
</dbReference>
<dbReference type="InterPro" id="IPR022644">
    <property type="entry name" value="De-COase2_N"/>
</dbReference>
<dbReference type="InterPro" id="IPR022653">
    <property type="entry name" value="De-COase2_pyr-phos_BS"/>
</dbReference>
<dbReference type="InterPro" id="IPR000183">
    <property type="entry name" value="Orn/DAP/Arg_de-COase"/>
</dbReference>
<dbReference type="InterPro" id="IPR029066">
    <property type="entry name" value="PLP-binding_barrel"/>
</dbReference>
<dbReference type="NCBIfam" id="TIGR01048">
    <property type="entry name" value="lysA"/>
    <property type="match status" value="1"/>
</dbReference>
<dbReference type="PANTHER" id="PTHR43727">
    <property type="entry name" value="DIAMINOPIMELATE DECARBOXYLASE"/>
    <property type="match status" value="1"/>
</dbReference>
<dbReference type="PANTHER" id="PTHR43727:SF2">
    <property type="entry name" value="GROUP IV DECARBOXYLASE"/>
    <property type="match status" value="1"/>
</dbReference>
<dbReference type="Pfam" id="PF02784">
    <property type="entry name" value="Orn_Arg_deC_N"/>
    <property type="match status" value="1"/>
</dbReference>
<dbReference type="Pfam" id="PF00278">
    <property type="entry name" value="Orn_DAP_Arg_deC"/>
    <property type="match status" value="1"/>
</dbReference>
<dbReference type="PRINTS" id="PR01181">
    <property type="entry name" value="DAPDCRBXLASE"/>
</dbReference>
<dbReference type="PRINTS" id="PR01179">
    <property type="entry name" value="ODADCRBXLASE"/>
</dbReference>
<dbReference type="SUPFAM" id="SSF50621">
    <property type="entry name" value="Alanine racemase C-terminal domain-like"/>
    <property type="match status" value="1"/>
</dbReference>
<dbReference type="SUPFAM" id="SSF51419">
    <property type="entry name" value="PLP-binding barrel"/>
    <property type="match status" value="1"/>
</dbReference>
<dbReference type="PROSITE" id="PS00878">
    <property type="entry name" value="ODR_DC_2_1"/>
    <property type="match status" value="1"/>
</dbReference>
<protein>
    <recommendedName>
        <fullName evidence="2">Diaminopimelate decarboxylase</fullName>
        <shortName evidence="2">DAP decarboxylase</shortName>
        <shortName evidence="2">DAPDC</shortName>
        <ecNumber evidence="2">4.1.1.20</ecNumber>
    </recommendedName>
</protein>
<evidence type="ECO:0000255" key="1"/>
<evidence type="ECO:0000255" key="2">
    <source>
        <dbReference type="HAMAP-Rule" id="MF_02120"/>
    </source>
</evidence>
<organism>
    <name type="scientific">Methanothermobacter thermautotrophicus (strain ATCC 29096 / DSM 1053 / JCM 10044 / NBRC 100330 / Delta H)</name>
    <name type="common">Methanobacterium thermoautotrophicum</name>
    <dbReference type="NCBI Taxonomy" id="187420"/>
    <lineage>
        <taxon>Archaea</taxon>
        <taxon>Methanobacteriati</taxon>
        <taxon>Methanobacteriota</taxon>
        <taxon>Methanomada group</taxon>
        <taxon>Methanobacteria</taxon>
        <taxon>Methanobacteriales</taxon>
        <taxon>Methanobacteriaceae</taxon>
        <taxon>Methanothermobacter</taxon>
    </lineage>
</organism>
<accession>O27390</accession>
<name>DCDA_METTH</name>
<keyword id="KW-0028">Amino-acid biosynthesis</keyword>
<keyword id="KW-0210">Decarboxylase</keyword>
<keyword id="KW-0456">Lyase</keyword>
<keyword id="KW-0457">Lysine biosynthesis</keyword>
<keyword id="KW-0663">Pyridoxal phosphate</keyword>
<keyword id="KW-1185">Reference proteome</keyword>
<sequence>MFPDIEVNDKGHLLIGGADAVELADEYGTPLYVIDEMRIRENYRRLYRAFSGEYSRFQVFYACKANTNLAVMRILEEEGSGIDAVSPGEIYTALMAGFDPDRILYTGNNVRDDELQFALDSGVRINVDSRSQLLRLSEIAPEGLRISFRVNPLVGAGHHEHCITGGEMSKFGVMEREAPEVYRMAMDLGFEPVGIHAHIGSGILDPEPFMLAVETLMDIAGRVHEATGVEFEFIDFGGGLGIPYTPEEEPLDIDEFASKITGLFKDKLSEYGLGRPMMCLEPGRYIVGDASYLLTRVNTIKESYRKFAGVDAGFNTLLRPAMYGSYHHILVAERPLDEPSEKMDVAGNVCESGDLFARDRQLPEINEGDVLAIMNAGAYSFSMSSQYNSRPRPAEVLVREGKVDVVRERETFSDLLRGQNVPARLLKR</sequence>
<comment type="function">
    <text evidence="2">Specifically catalyzes the decarboxylation of meso-diaminopimelate (meso-DAP) to L-lysine.</text>
</comment>
<comment type="catalytic activity">
    <reaction evidence="2">
        <text>meso-2,6-diaminopimelate + H(+) = L-lysine + CO2</text>
        <dbReference type="Rhea" id="RHEA:15101"/>
        <dbReference type="ChEBI" id="CHEBI:15378"/>
        <dbReference type="ChEBI" id="CHEBI:16526"/>
        <dbReference type="ChEBI" id="CHEBI:32551"/>
        <dbReference type="ChEBI" id="CHEBI:57791"/>
        <dbReference type="EC" id="4.1.1.20"/>
    </reaction>
</comment>
<comment type="cofactor">
    <cofactor evidence="2">
        <name>pyridoxal 5'-phosphate</name>
        <dbReference type="ChEBI" id="CHEBI:597326"/>
    </cofactor>
</comment>
<comment type="pathway">
    <text evidence="2">Amino-acid biosynthesis; L-lysine biosynthesis via DAP pathway; L-lysine from DL-2,6-diaminopimelate: step 1/1.</text>
</comment>
<comment type="subunit">
    <text evidence="2">Homodimer.</text>
</comment>
<comment type="similarity">
    <text evidence="2">Belongs to the Orn/Lys/Arg decarboxylase class-II family. LysA subfamily.</text>
</comment>
<reference key="1">
    <citation type="journal article" date="1997" name="J. Bacteriol.">
        <title>Complete genome sequence of Methanobacterium thermoautotrophicum deltaH: functional analysis and comparative genomics.</title>
        <authorList>
            <person name="Smith D.R."/>
            <person name="Doucette-Stamm L.A."/>
            <person name="Deloughery C."/>
            <person name="Lee H.-M."/>
            <person name="Dubois J."/>
            <person name="Aldredge T."/>
            <person name="Bashirzadeh R."/>
            <person name="Blakely D."/>
            <person name="Cook R."/>
            <person name="Gilbert K."/>
            <person name="Harrison D."/>
            <person name="Hoang L."/>
            <person name="Keagle P."/>
            <person name="Lumm W."/>
            <person name="Pothier B."/>
            <person name="Qiu D."/>
            <person name="Spadafora R."/>
            <person name="Vicare R."/>
            <person name="Wang Y."/>
            <person name="Wierzbowski J."/>
            <person name="Gibson R."/>
            <person name="Jiwani N."/>
            <person name="Caruso A."/>
            <person name="Bush D."/>
            <person name="Safer H."/>
            <person name="Patwell D."/>
            <person name="Prabhakar S."/>
            <person name="McDougall S."/>
            <person name="Shimer G."/>
            <person name="Goyal A."/>
            <person name="Pietrovski S."/>
            <person name="Church G.M."/>
            <person name="Daniels C.J."/>
            <person name="Mao J.-I."/>
            <person name="Rice P."/>
            <person name="Noelling J."/>
            <person name="Reeve J.N."/>
        </authorList>
    </citation>
    <scope>NUCLEOTIDE SEQUENCE [LARGE SCALE GENOMIC DNA]</scope>
    <source>
        <strain>ATCC 29096 / DSM 1053 / JCM 10044 / NBRC 100330 / Delta H</strain>
    </source>
</reference>
<feature type="chain" id="PRO_0000149942" description="Diaminopimelate decarboxylase">
    <location>
        <begin position="1"/>
        <end position="428"/>
    </location>
</feature>
<feature type="active site" description="Proton donor" evidence="1">
    <location>
        <position position="350"/>
    </location>
</feature>
<feature type="binding site" evidence="2">
    <location>
        <position position="239"/>
    </location>
    <ligand>
        <name>pyridoxal 5'-phosphate</name>
        <dbReference type="ChEBI" id="CHEBI:597326"/>
    </ligand>
</feature>
<feature type="binding site" evidence="2">
    <location>
        <begin position="281"/>
        <end position="284"/>
    </location>
    <ligand>
        <name>pyridoxal 5'-phosphate</name>
        <dbReference type="ChEBI" id="CHEBI:597326"/>
    </ligand>
</feature>
<feature type="binding site" evidence="2">
    <location>
        <position position="284"/>
    </location>
    <ligand>
        <name>substrate</name>
    </ligand>
</feature>
<feature type="binding site" evidence="2">
    <location>
        <position position="319"/>
    </location>
    <ligand>
        <name>substrate</name>
    </ligand>
</feature>
<feature type="binding site" evidence="2">
    <location>
        <position position="323"/>
    </location>
    <ligand>
        <name>substrate</name>
    </ligand>
</feature>
<feature type="binding site" evidence="2">
    <location>
        <position position="351"/>
    </location>
    <ligand>
        <name>substrate</name>
    </ligand>
</feature>
<feature type="binding site" evidence="2">
    <location>
        <position position="379"/>
    </location>
    <ligand>
        <name>pyridoxal 5'-phosphate</name>
        <dbReference type="ChEBI" id="CHEBI:597326"/>
    </ligand>
</feature>
<feature type="binding site" evidence="2">
    <location>
        <position position="379"/>
    </location>
    <ligand>
        <name>substrate</name>
    </ligand>
</feature>
<feature type="modified residue" description="N6-(pyridoxal phosphate)lysine" evidence="2">
    <location>
        <position position="64"/>
    </location>
</feature>